<sequence>MDNDGTIVDVTTHQLPWHTASHQRQRAFAQSAKLQDVLYEIRGPVHQHAARLEAEGHRILKLNIGNPAPFGFEAPDVIMRDIIQALPYAQGYSDSQGILSARRAVVTRYELVPGFPRFDVDDVYLGNGVSELITMTLQALLDNGDQVLIPSPDYPLWTASTSLAGGTPVHYLCDETQGWQPDIADLESKITERTKALVVINPNNPTGAVYSCEILTQMVDLARKHQLLLLADEIYDKILYDDAKHISLASIAPDMLCLTFNGLSKAYRVAGYRAGWLAITGPKEHASSFIEGIGLLANMRLCPNVPAQHAIQVALGGHQSIEDLVLPGGRLLEQRDIAWTKLNEIPGVSCVKPAGALYAFPRLDPEVYDIDDDEQLVLDLLLSEKILVTQGTGFNWPAPDHLRLVTLPWSRDLAAAIERLGNFLVSYRQ</sequence>
<dbReference type="EC" id="2.6.1.2" evidence="3"/>
<dbReference type="EMBL" id="AE000516">
    <property type="protein sequence ID" value="AAK44574.1"/>
    <property type="molecule type" value="Genomic_DNA"/>
</dbReference>
<dbReference type="PIR" id="H70506">
    <property type="entry name" value="H70506"/>
</dbReference>
<dbReference type="RefSeq" id="WP_003401733.1">
    <property type="nucleotide sequence ID" value="NZ_KK341227.1"/>
</dbReference>
<dbReference type="SMR" id="P9WQ90"/>
<dbReference type="KEGG" id="mtc:MT0351"/>
<dbReference type="PATRIC" id="fig|83331.31.peg.372"/>
<dbReference type="HOGENOM" id="CLU_017584_4_2_11"/>
<dbReference type="Proteomes" id="UP000001020">
    <property type="component" value="Chromosome"/>
</dbReference>
<dbReference type="GO" id="GO:0005737">
    <property type="term" value="C:cytoplasm"/>
    <property type="evidence" value="ECO:0007669"/>
    <property type="project" value="UniProtKB-SubCell"/>
</dbReference>
<dbReference type="GO" id="GO:0004021">
    <property type="term" value="F:L-alanine:2-oxoglutarate aminotransferase activity"/>
    <property type="evidence" value="ECO:0007669"/>
    <property type="project" value="UniProtKB-EC"/>
</dbReference>
<dbReference type="GO" id="GO:0030170">
    <property type="term" value="F:pyridoxal phosphate binding"/>
    <property type="evidence" value="ECO:0007669"/>
    <property type="project" value="InterPro"/>
</dbReference>
<dbReference type="GO" id="GO:0009058">
    <property type="term" value="P:biosynthetic process"/>
    <property type="evidence" value="ECO:0007669"/>
    <property type="project" value="InterPro"/>
</dbReference>
<dbReference type="CDD" id="cd00609">
    <property type="entry name" value="AAT_like"/>
    <property type="match status" value="1"/>
</dbReference>
<dbReference type="FunFam" id="3.40.640.10:FF:000019">
    <property type="entry name" value="Pyridoxal phosphate-dependent aminotransferase"/>
    <property type="match status" value="1"/>
</dbReference>
<dbReference type="Gene3D" id="3.90.1150.10">
    <property type="entry name" value="Aspartate Aminotransferase, domain 1"/>
    <property type="match status" value="1"/>
</dbReference>
<dbReference type="Gene3D" id="3.40.640.10">
    <property type="entry name" value="Type I PLP-dependent aspartate aminotransferase-like (Major domain)"/>
    <property type="match status" value="1"/>
</dbReference>
<dbReference type="InterPro" id="IPR051926">
    <property type="entry name" value="Ala_Aminotransferase"/>
</dbReference>
<dbReference type="InterPro" id="IPR004839">
    <property type="entry name" value="Aminotransferase_I/II_large"/>
</dbReference>
<dbReference type="InterPro" id="IPR015424">
    <property type="entry name" value="PyrdxlP-dep_Trfase"/>
</dbReference>
<dbReference type="InterPro" id="IPR015421">
    <property type="entry name" value="PyrdxlP-dep_Trfase_major"/>
</dbReference>
<dbReference type="InterPro" id="IPR015422">
    <property type="entry name" value="PyrdxlP-dep_Trfase_small"/>
</dbReference>
<dbReference type="PANTHER" id="PTHR43488">
    <property type="entry name" value="GLUTAMATE-PYRUVATE AMINOTRANSFERASE ALAA"/>
    <property type="match status" value="1"/>
</dbReference>
<dbReference type="PANTHER" id="PTHR43488:SF2">
    <property type="entry name" value="GLUTAMATE-PYRUVATE AMINOTRANSFERASE ALAA"/>
    <property type="match status" value="1"/>
</dbReference>
<dbReference type="Pfam" id="PF00155">
    <property type="entry name" value="Aminotran_1_2"/>
    <property type="match status" value="1"/>
</dbReference>
<dbReference type="SUPFAM" id="SSF53383">
    <property type="entry name" value="PLP-dependent transferases"/>
    <property type="match status" value="1"/>
</dbReference>
<accession>P9WQ90</accession>
<accession>L0T6D2</accession>
<accession>O33267</accession>
<accession>P63498</accession>
<comment type="catalytic activity">
    <reaction evidence="3">
        <text>L-alanine + 2-oxoglutarate = pyruvate + L-glutamate</text>
        <dbReference type="Rhea" id="RHEA:19453"/>
        <dbReference type="ChEBI" id="CHEBI:15361"/>
        <dbReference type="ChEBI" id="CHEBI:16810"/>
        <dbReference type="ChEBI" id="CHEBI:29985"/>
        <dbReference type="ChEBI" id="CHEBI:57972"/>
        <dbReference type="EC" id="2.6.1.2"/>
    </reaction>
</comment>
<comment type="cofactor">
    <cofactor evidence="4">
        <name>pyridoxal 5'-phosphate</name>
        <dbReference type="ChEBI" id="CHEBI:597326"/>
    </cofactor>
</comment>
<comment type="subunit">
    <text evidence="1">Homodimer.</text>
</comment>
<comment type="subcellular location">
    <subcellularLocation>
        <location evidence="1">Cytoplasm</location>
    </subcellularLocation>
</comment>
<comment type="similarity">
    <text evidence="5">Belongs to the class-I pyridoxal-phosphate-dependent aminotransferase family.</text>
</comment>
<proteinExistence type="inferred from homology"/>
<gene>
    <name type="primary">aspC</name>
    <name type="ordered locus">MT0351</name>
</gene>
<feature type="chain" id="PRO_0000426817" description="Alanine aminotransferase">
    <location>
        <begin position="1"/>
        <end position="429"/>
    </location>
</feature>
<feature type="binding site" evidence="2">
    <location>
        <position position="65"/>
    </location>
    <ligand>
        <name>L-alanine</name>
        <dbReference type="ChEBI" id="CHEBI:57972"/>
    </ligand>
</feature>
<feature type="binding site" evidence="2">
    <location>
        <position position="204"/>
    </location>
    <ligand>
        <name>L-alanine</name>
        <dbReference type="ChEBI" id="CHEBI:57972"/>
    </ligand>
</feature>
<feature type="binding site" evidence="2">
    <location>
        <position position="403"/>
    </location>
    <ligand>
        <name>L-alanine</name>
        <dbReference type="ChEBI" id="CHEBI:57972"/>
    </ligand>
</feature>
<feature type="modified residue" description="N6-(pyridoxal phosphate)lysine" evidence="4">
    <location>
        <position position="265"/>
    </location>
</feature>
<organism>
    <name type="scientific">Mycobacterium tuberculosis (strain CDC 1551 / Oshkosh)</name>
    <dbReference type="NCBI Taxonomy" id="83331"/>
    <lineage>
        <taxon>Bacteria</taxon>
        <taxon>Bacillati</taxon>
        <taxon>Actinomycetota</taxon>
        <taxon>Actinomycetes</taxon>
        <taxon>Mycobacteriales</taxon>
        <taxon>Mycobacteriaceae</taxon>
        <taxon>Mycobacterium</taxon>
        <taxon>Mycobacterium tuberculosis complex</taxon>
    </lineage>
</organism>
<keyword id="KW-0032">Aminotransferase</keyword>
<keyword id="KW-0963">Cytoplasm</keyword>
<keyword id="KW-0663">Pyridoxal phosphate</keyword>
<keyword id="KW-1185">Reference proteome</keyword>
<keyword id="KW-0808">Transferase</keyword>
<name>ALAA_MYCTO</name>
<reference key="1">
    <citation type="journal article" date="2002" name="J. Bacteriol.">
        <title>Whole-genome comparison of Mycobacterium tuberculosis clinical and laboratory strains.</title>
        <authorList>
            <person name="Fleischmann R.D."/>
            <person name="Alland D."/>
            <person name="Eisen J.A."/>
            <person name="Carpenter L."/>
            <person name="White O."/>
            <person name="Peterson J.D."/>
            <person name="DeBoy R.T."/>
            <person name="Dodson R.J."/>
            <person name="Gwinn M.L."/>
            <person name="Haft D.H."/>
            <person name="Hickey E.K."/>
            <person name="Kolonay J.F."/>
            <person name="Nelson W.C."/>
            <person name="Umayam L.A."/>
            <person name="Ermolaeva M.D."/>
            <person name="Salzberg S.L."/>
            <person name="Delcher A."/>
            <person name="Utterback T.R."/>
            <person name="Weidman J.F."/>
            <person name="Khouri H.M."/>
            <person name="Gill J."/>
            <person name="Mikula A."/>
            <person name="Bishai W."/>
            <person name="Jacobs W.R. Jr."/>
            <person name="Venter J.C."/>
            <person name="Fraser C.M."/>
        </authorList>
    </citation>
    <scope>NUCLEOTIDE SEQUENCE [LARGE SCALE GENOMIC DNA]</scope>
    <source>
        <strain>CDC 1551 / Oshkosh</strain>
    </source>
</reference>
<evidence type="ECO:0000250" key="1"/>
<evidence type="ECO:0000250" key="2">
    <source>
        <dbReference type="UniProtKB" id="P0A959"/>
    </source>
</evidence>
<evidence type="ECO:0000250" key="3">
    <source>
        <dbReference type="UniProtKB" id="P9WQ91"/>
    </source>
</evidence>
<evidence type="ECO:0000250" key="4">
    <source>
        <dbReference type="UniProtKB" id="Q56232"/>
    </source>
</evidence>
<evidence type="ECO:0000305" key="5"/>
<protein>
    <recommendedName>
        <fullName evidence="3">Alanine aminotransferase</fullName>
        <ecNumber evidence="3">2.6.1.2</ecNumber>
    </recommendedName>
    <alternativeName>
        <fullName evidence="3">Alanine transaminase</fullName>
    </alternativeName>
    <alternativeName>
        <fullName>Transaminase A</fullName>
    </alternativeName>
</protein>